<sequence length="145" mass="16122">NDVITVQTPAFAESVTEGDVRVEGGTPLFTLRHNLKLGFMSAFVKASAFALQEQPVVNAVIDDATKEVVYRDYIDISVAVATPRGLVVPVIRNVETMNYADIERVEVRPMMYVALTYDHRLIDGREAVTFLRAAVEDPRVLLLDL</sequence>
<comment type="function">
    <text evidence="2 5">Dihydrolipoamide succinyltransferase (E2) component of the 2-oxoglutarate dehydrogenase complex (By similarity). The 2-oxoglutarate dehydrogenase complex catalyzes the overall conversion of 2-oxoglutarate to succinyl-CoA and CO(2) (By similarity). The 2-oxoglutarate dehydrogenase complex is mainly active in the mitochondrion. A fraction of the 2-oxoglutarate dehydrogenase complex also localizes in the nucleus and is required for lysine succinylation of histones: associates with KAT2A on chromatin and provides succinyl-CoA to histone succinyltransferase KAT2A (By similarity).</text>
</comment>
<comment type="catalytic activity">
    <reaction evidence="2">
        <text>N(6)-[(R)-dihydrolipoyl]-L-lysyl-[protein] + succinyl-CoA = N(6)-[(R)-S(8)-succinyldihydrolipoyl]-L-lysyl-[protein] + CoA</text>
        <dbReference type="Rhea" id="RHEA:15213"/>
        <dbReference type="Rhea" id="RHEA-COMP:10475"/>
        <dbReference type="Rhea" id="RHEA-COMP:20092"/>
        <dbReference type="ChEBI" id="CHEBI:57287"/>
        <dbReference type="ChEBI" id="CHEBI:57292"/>
        <dbReference type="ChEBI" id="CHEBI:83100"/>
        <dbReference type="ChEBI" id="CHEBI:83120"/>
        <dbReference type="EC" id="2.3.1.61"/>
    </reaction>
    <physiologicalReaction direction="right-to-left" evidence="2">
        <dbReference type="Rhea" id="RHEA:15215"/>
    </physiologicalReaction>
</comment>
<comment type="cofactor">
    <cofactor evidence="1">
        <name>(R)-lipoate</name>
        <dbReference type="ChEBI" id="CHEBI:83088"/>
    </cofactor>
    <text evidence="1">Binds 1 lipoyl cofactor covalently.</text>
</comment>
<comment type="pathway">
    <text evidence="3">Amino-acid degradation; L-lysine degradation via saccharopine pathway; glutaryl-CoA from L-lysine: step 6/6.</text>
</comment>
<comment type="pathway">
    <text evidence="2">Carbohydrate metabolism; tricarboxylic acid cycle.</text>
</comment>
<comment type="subunit">
    <text evidence="2 4">The 2-oxoglutarate dehydrogenase complex is composed of OGDH (2-oxoglutarate dehydrogenase; E1), DLST (dihydrolipoamide succinyltransferase; E2), DLD (dihydrolipoamide dehydrogenase; E3) and the assembly factor KGD4 (By similarity). It contains multiple copies of the three enzymatic components (E1, E2 and E3). In the nucleus, the 2-oxoglutarate dehydrogenase complex associates with KAT2A. Interacts with ABHD11; this interaction maintains the functional lipoylation of the 2-oxoglutarate dehydrogenase complex (By similarity).</text>
</comment>
<comment type="subcellular location">
    <subcellularLocation>
        <location evidence="2">Mitochondrion matrix</location>
    </subcellularLocation>
    <subcellularLocation>
        <location evidence="2">Nucleus</location>
    </subcellularLocation>
    <text evidence="2">Mainly localizes in the mitochondrion. A small fraction localizes to the nucleus, where the 2-oxoglutarate dehydrogenase complex is required for histone succinylation.</text>
</comment>
<comment type="similarity">
    <text evidence="7">Belongs to the 2-oxoacid dehydrogenase family.</text>
</comment>
<feature type="chain" id="PRO_0000394748" description="Dihydrolipoyllysine-residue succinyltransferase component of 2-oxoglutarate dehydrogenase complex, mitochondrial">
    <location>
        <begin position="1" status="less than"/>
        <end position="145"/>
    </location>
</feature>
<feature type="domain" description="Lipoyl-binding" evidence="6">
    <location>
        <begin position="4"/>
        <end position="31"/>
    </location>
</feature>
<feature type="active site" evidence="5">
    <location>
        <position position="119"/>
    </location>
</feature>
<feature type="active site" evidence="5">
    <location>
        <position position="123"/>
    </location>
</feature>
<feature type="modified residue" description="Phosphoserine" evidence="4">
    <location>
        <position position="14"/>
    </location>
</feature>
<feature type="modified residue" description="N6-acetyllysine" evidence="4">
    <location>
        <position position="36"/>
    </location>
</feature>
<feature type="modified residue" description="N6-acetyllysine" evidence="4">
    <location>
        <position position="66"/>
    </location>
</feature>
<feature type="non-consecutive residues" evidence="7">
    <location>
        <begin position="21"/>
        <end position="22"/>
    </location>
</feature>
<feature type="non-consecutive residues" evidence="7">
    <location>
        <begin position="32"/>
        <end position="33"/>
    </location>
</feature>
<feature type="non-consecutive residues" evidence="7">
    <location>
        <begin position="104"/>
        <end position="105"/>
    </location>
</feature>
<feature type="non-consecutive residues" evidence="7">
    <location>
        <begin position="132"/>
        <end position="133"/>
    </location>
</feature>
<feature type="non-terminal residue">
    <location>
        <position position="1"/>
    </location>
</feature>
<reference key="1">
    <citation type="journal article" date="2010" name="Asian J. Androl.">
        <title>Glucose-regulated protein precursor (GRP78) and tumor rejection antigen (GP96) are unique to hamster caput epididymal spermatozoa.</title>
        <authorList>
            <person name="Kameshwari D.B."/>
            <person name="Bhande S."/>
            <person name="Sundaram C.S."/>
            <person name="Kota V."/>
            <person name="Siva A.B."/>
            <person name="Shivaji S."/>
        </authorList>
    </citation>
    <scope>IDENTIFICATION BY MASS SPECTROMETRY</scope>
</reference>
<evidence type="ECO:0000250" key="1">
    <source>
        <dbReference type="UniProtKB" id="P11179"/>
    </source>
</evidence>
<evidence type="ECO:0000250" key="2">
    <source>
        <dbReference type="UniProtKB" id="P36957"/>
    </source>
</evidence>
<evidence type="ECO:0000250" key="3">
    <source>
        <dbReference type="UniProtKB" id="Q01205"/>
    </source>
</evidence>
<evidence type="ECO:0000250" key="4">
    <source>
        <dbReference type="UniProtKB" id="Q9D2G2"/>
    </source>
</evidence>
<evidence type="ECO:0000250" key="5">
    <source>
        <dbReference type="UniProtKB" id="Q9N0F1"/>
    </source>
</evidence>
<evidence type="ECO:0000255" key="6"/>
<evidence type="ECO:0000305" key="7"/>
<accession>P86219</accession>
<dbReference type="EC" id="2.3.1.61" evidence="2"/>
<dbReference type="SMR" id="P86219"/>
<dbReference type="STRING" id="10036.ENSMAUP00000001145"/>
<dbReference type="eggNOG" id="KOG0559">
    <property type="taxonomic scope" value="Eukaryota"/>
</dbReference>
<dbReference type="UniPathway" id="UPA00223"/>
<dbReference type="UniPathway" id="UPA00868">
    <property type="reaction ID" value="UER00840"/>
</dbReference>
<dbReference type="Proteomes" id="UP000189706">
    <property type="component" value="Unplaced"/>
</dbReference>
<dbReference type="GO" id="GO:0005759">
    <property type="term" value="C:mitochondrial matrix"/>
    <property type="evidence" value="ECO:0007669"/>
    <property type="project" value="UniProtKB-SubCell"/>
</dbReference>
<dbReference type="GO" id="GO:0005739">
    <property type="term" value="C:mitochondrion"/>
    <property type="evidence" value="ECO:0000250"/>
    <property type="project" value="UniProtKB"/>
</dbReference>
<dbReference type="GO" id="GO:0005634">
    <property type="term" value="C:nucleus"/>
    <property type="evidence" value="ECO:0000250"/>
    <property type="project" value="UniProtKB"/>
</dbReference>
<dbReference type="GO" id="GO:0045252">
    <property type="term" value="C:oxoglutarate dehydrogenase complex"/>
    <property type="evidence" value="ECO:0000250"/>
    <property type="project" value="UniProtKB"/>
</dbReference>
<dbReference type="GO" id="GO:0016746">
    <property type="term" value="F:acyltransferase activity"/>
    <property type="evidence" value="ECO:0000250"/>
    <property type="project" value="UniProtKB"/>
</dbReference>
<dbReference type="GO" id="GO:0004149">
    <property type="term" value="F:dihydrolipoyllysine-residue succinyltransferase activity"/>
    <property type="evidence" value="ECO:0000250"/>
    <property type="project" value="UniProtKB"/>
</dbReference>
<dbReference type="GO" id="GO:0006103">
    <property type="term" value="P:2-oxoglutarate metabolic process"/>
    <property type="evidence" value="ECO:0000250"/>
    <property type="project" value="UniProtKB"/>
</dbReference>
<dbReference type="GO" id="GO:0033512">
    <property type="term" value="P:L-lysine catabolic process to acetyl-CoA via saccharopine"/>
    <property type="evidence" value="ECO:0007669"/>
    <property type="project" value="UniProtKB-UniPathway"/>
</dbReference>
<dbReference type="GO" id="GO:0006104">
    <property type="term" value="P:succinyl-CoA metabolic process"/>
    <property type="evidence" value="ECO:0000250"/>
    <property type="project" value="UniProtKB"/>
</dbReference>
<dbReference type="GO" id="GO:0006099">
    <property type="term" value="P:tricarboxylic acid cycle"/>
    <property type="evidence" value="ECO:0000250"/>
    <property type="project" value="UniProtKB"/>
</dbReference>
<dbReference type="Gene3D" id="3.30.559.10">
    <property type="entry name" value="Chloramphenicol acetyltransferase-like domain"/>
    <property type="match status" value="2"/>
</dbReference>
<dbReference type="InterPro" id="IPR050537">
    <property type="entry name" value="2-oxoacid_dehydrogenase"/>
</dbReference>
<dbReference type="InterPro" id="IPR001078">
    <property type="entry name" value="2-oxoacid_DH_actylTfrase"/>
</dbReference>
<dbReference type="InterPro" id="IPR023213">
    <property type="entry name" value="CAT-like_dom_sf"/>
</dbReference>
<dbReference type="PANTHER" id="PTHR43416:SF5">
    <property type="entry name" value="DIHYDROLIPOYLLYSINE-RESIDUE SUCCINYLTRANSFERASE COMPONENT OF 2-OXOGLUTARATE DEHYDROGENASE COMPLEX, MITOCHONDRIAL"/>
    <property type="match status" value="1"/>
</dbReference>
<dbReference type="PANTHER" id="PTHR43416">
    <property type="entry name" value="DIHYDROLIPOYLLYSINE-RESIDUE SUCCINYLTRANSFERASE COMPONENT OF 2-OXOGLUTARATE DEHYDROGENASE COMPLEX, MITOCHONDRIAL-RELATED"/>
    <property type="match status" value="1"/>
</dbReference>
<dbReference type="Pfam" id="PF00198">
    <property type="entry name" value="2-oxoacid_dh"/>
    <property type="match status" value="1"/>
</dbReference>
<dbReference type="SUPFAM" id="SSF52777">
    <property type="entry name" value="CoA-dependent acyltransferases"/>
    <property type="match status" value="1"/>
</dbReference>
<organism>
    <name type="scientific">Mesocricetus auratus</name>
    <name type="common">Golden hamster</name>
    <dbReference type="NCBI Taxonomy" id="10036"/>
    <lineage>
        <taxon>Eukaryota</taxon>
        <taxon>Metazoa</taxon>
        <taxon>Chordata</taxon>
        <taxon>Craniata</taxon>
        <taxon>Vertebrata</taxon>
        <taxon>Euteleostomi</taxon>
        <taxon>Mammalia</taxon>
        <taxon>Eutheria</taxon>
        <taxon>Euarchontoglires</taxon>
        <taxon>Glires</taxon>
        <taxon>Rodentia</taxon>
        <taxon>Myomorpha</taxon>
        <taxon>Muroidea</taxon>
        <taxon>Cricetidae</taxon>
        <taxon>Cricetinae</taxon>
        <taxon>Mesocricetus</taxon>
    </lineage>
</organism>
<name>ODO2_MESAU</name>
<keyword id="KW-0007">Acetylation</keyword>
<keyword id="KW-0012">Acyltransferase</keyword>
<keyword id="KW-0450">Lipoyl</keyword>
<keyword id="KW-0496">Mitochondrion</keyword>
<keyword id="KW-0539">Nucleus</keyword>
<keyword id="KW-0597">Phosphoprotein</keyword>
<keyword id="KW-1185">Reference proteome</keyword>
<keyword id="KW-0808">Transferase</keyword>
<keyword id="KW-0816">Tricarboxylic acid cycle</keyword>
<protein>
    <recommendedName>
        <fullName evidence="3">Dihydrolipoyllysine-residue succinyltransferase component of 2-oxoglutarate dehydrogenase complex, mitochondrial</fullName>
        <ecNumber evidence="2">2.3.1.61</ecNumber>
    </recommendedName>
    <alternativeName>
        <fullName evidence="3">2-oxoglutarate dehydrogenase complex component E2</fullName>
        <shortName evidence="3">OGDC-E2</shortName>
    </alternativeName>
    <alternativeName>
        <fullName evidence="3">Dihydrolipoamide succinyltransferase component of 2-oxoglutarate dehydrogenase complex</fullName>
    </alternativeName>
    <alternativeName>
        <fullName evidence="3">E2K</fullName>
    </alternativeName>
</protein>
<gene>
    <name evidence="3" type="primary">DLST</name>
</gene>
<proteinExistence type="evidence at protein level"/>